<reference key="1">
    <citation type="journal article" date="1997" name="Proc. Natl. Acad. Sci. U.S.A.">
        <title>Complete nucleotide sequence of the chloroplast genome from the green alga Chlorella vulgaris: the existence of genes possibly involved in chloroplast division.</title>
        <authorList>
            <person name="Wakasugi T."/>
            <person name="Nagai T."/>
            <person name="Kapoor M."/>
            <person name="Sugita M."/>
            <person name="Ito M."/>
            <person name="Ito S."/>
            <person name="Tsudzuki J."/>
            <person name="Nakashima K."/>
            <person name="Tsudzuki T."/>
            <person name="Suzuki Y."/>
            <person name="Hamada A."/>
            <person name="Ohta T."/>
            <person name="Inamura A."/>
            <person name="Yoshinaga K."/>
            <person name="Sugiura M."/>
        </authorList>
    </citation>
    <scope>NUCLEOTIDE SEQUENCE [LARGE SCALE GENOMIC DNA]</scope>
    <source>
        <strain>IAM C-27 / Tamiya</strain>
    </source>
</reference>
<keyword id="KW-0150">Chloroplast</keyword>
<keyword id="KW-0472">Membrane</keyword>
<keyword id="KW-0602">Photosynthesis</keyword>
<keyword id="KW-0603">Photosystem I</keyword>
<keyword id="KW-0934">Plastid</keyword>
<keyword id="KW-0793">Thylakoid</keyword>
<keyword id="KW-0812">Transmembrane</keyword>
<keyword id="KW-1133">Transmembrane helix</keyword>
<sequence>MSAQILPSILVPLVGLVFPAIAMASMFLYIEKEEIN</sequence>
<comment type="function">
    <text evidence="1">May help in the organization of the PsaL subunit.</text>
</comment>
<comment type="subcellular location">
    <subcellularLocation>
        <location evidence="1">Plastid</location>
        <location evidence="1">Chloroplast thylakoid membrane</location>
        <topology evidence="1">Single-pass membrane protein</topology>
    </subcellularLocation>
</comment>
<comment type="similarity">
    <text evidence="3">Belongs to the PsaI family.</text>
</comment>
<protein>
    <recommendedName>
        <fullName>Photosystem I reaction center subunit VIII</fullName>
        <shortName>PSI-I</shortName>
    </recommendedName>
</protein>
<geneLocation type="chloroplast"/>
<name>PSAI_CHLVU</name>
<gene>
    <name type="primary">psaI</name>
</gene>
<proteinExistence type="inferred from homology"/>
<evidence type="ECO:0000250" key="1"/>
<evidence type="ECO:0000255" key="2"/>
<evidence type="ECO:0000305" key="3"/>
<accession>P58214</accession>
<organism>
    <name type="scientific">Chlorella vulgaris</name>
    <name type="common">Green alga</name>
    <dbReference type="NCBI Taxonomy" id="3077"/>
    <lineage>
        <taxon>Eukaryota</taxon>
        <taxon>Viridiplantae</taxon>
        <taxon>Chlorophyta</taxon>
        <taxon>core chlorophytes</taxon>
        <taxon>Trebouxiophyceae</taxon>
        <taxon>Chlorellales</taxon>
        <taxon>Chlorellaceae</taxon>
        <taxon>Chlorella clade</taxon>
        <taxon>Chlorella</taxon>
    </lineage>
</organism>
<dbReference type="EMBL" id="AB001684">
    <property type="protein sequence ID" value="BAA57910.1"/>
    <property type="molecule type" value="Genomic_DNA"/>
</dbReference>
<dbReference type="PIR" id="T07262">
    <property type="entry name" value="T07262"/>
</dbReference>
<dbReference type="RefSeq" id="NP_045834.1">
    <property type="nucleotide sequence ID" value="NC_001865.1"/>
</dbReference>
<dbReference type="SMR" id="P58214"/>
<dbReference type="GeneID" id="809123"/>
<dbReference type="OrthoDB" id="35618at2759"/>
<dbReference type="GO" id="GO:0009535">
    <property type="term" value="C:chloroplast thylakoid membrane"/>
    <property type="evidence" value="ECO:0007669"/>
    <property type="project" value="UniProtKB-SubCell"/>
</dbReference>
<dbReference type="GO" id="GO:0009522">
    <property type="term" value="C:photosystem I"/>
    <property type="evidence" value="ECO:0007669"/>
    <property type="project" value="UniProtKB-KW"/>
</dbReference>
<dbReference type="GO" id="GO:0015979">
    <property type="term" value="P:photosynthesis"/>
    <property type="evidence" value="ECO:0007669"/>
    <property type="project" value="UniProtKB-UniRule"/>
</dbReference>
<dbReference type="HAMAP" id="MF_00431">
    <property type="entry name" value="PSI_PsaI"/>
    <property type="match status" value="1"/>
</dbReference>
<dbReference type="InterPro" id="IPR001302">
    <property type="entry name" value="PSI_PsaI"/>
</dbReference>
<dbReference type="InterPro" id="IPR036357">
    <property type="entry name" value="PSI_PsaI_sf"/>
</dbReference>
<dbReference type="NCBIfam" id="TIGR03052">
    <property type="entry name" value="PS_I_psaI"/>
    <property type="match status" value="1"/>
</dbReference>
<dbReference type="PANTHER" id="PTHR35775">
    <property type="match status" value="1"/>
</dbReference>
<dbReference type="PANTHER" id="PTHR35775:SF2">
    <property type="entry name" value="PHOTOSYSTEM I REACTION CENTER SUBUNIT VIII"/>
    <property type="match status" value="1"/>
</dbReference>
<dbReference type="Pfam" id="PF00796">
    <property type="entry name" value="PSI_8"/>
    <property type="match status" value="1"/>
</dbReference>
<dbReference type="SUPFAM" id="SSF81540">
    <property type="entry name" value="Subunit VIII of photosystem I reaction centre, PsaI"/>
    <property type="match status" value="1"/>
</dbReference>
<feature type="chain" id="PRO_0000194650" description="Photosystem I reaction center subunit VIII">
    <location>
        <begin position="1"/>
        <end position="36"/>
    </location>
</feature>
<feature type="transmembrane region" description="Helical" evidence="2">
    <location>
        <begin position="10"/>
        <end position="30"/>
    </location>
</feature>